<sequence length="454" mass="51622">MPVPQVAIVGRPNVGKSSLFNWLARRRLAIVDNFEGVTRDRMTTLIESDDQFFELIDTGGMGVEDADDLTSDVRRQIDMAIASADVILLVVDVQTGLMPLDEEVVERLRGVERPVILVANKADQEHQDIHADEFRRLGRGHLITVSTTQNRHRDDLIQVIVDRLPEKDEDLVAPESSMKIAIVGRRNVGKSTFVNTLAESDRMIVSEVAGTTRDSVDVRFEIDGQTFLAIDTPGLRKRKSIRTDLDFYGTHRAQRSVRRADVVLMFFDALEKTSKVDKQLVGYIMEHHKPVIFVVNKWDKVDKEVPTERWVKYLRHQFTTLSYAPIAFITGQTGRNVKAVMNHAAMLYKQAQSRVSTGELNRILRAAIEQHPPAMYQGRRPKIFYATQVSTEPPTVVVMCSDPKALTHDYQRYLIGWMRDHLPFGEVPIKLYMQQRSRSEAKAERSGQGRSLES</sequence>
<keyword id="KW-0342">GTP-binding</keyword>
<keyword id="KW-0547">Nucleotide-binding</keyword>
<keyword id="KW-1185">Reference proteome</keyword>
<keyword id="KW-0677">Repeat</keyword>
<keyword id="KW-0690">Ribosome biogenesis</keyword>
<proteinExistence type="inferred from homology"/>
<evidence type="ECO:0000255" key="1">
    <source>
        <dbReference type="HAMAP-Rule" id="MF_00195"/>
    </source>
</evidence>
<reference key="1">
    <citation type="journal article" date="2003" name="Proc. Natl. Acad. Sci. U.S.A.">
        <title>Complete genome sequence of the marine planctomycete Pirellula sp. strain 1.</title>
        <authorList>
            <person name="Gloeckner F.O."/>
            <person name="Kube M."/>
            <person name="Bauer M."/>
            <person name="Teeling H."/>
            <person name="Lombardot T."/>
            <person name="Ludwig W."/>
            <person name="Gade D."/>
            <person name="Beck A."/>
            <person name="Borzym K."/>
            <person name="Heitmann K."/>
            <person name="Rabus R."/>
            <person name="Schlesner H."/>
            <person name="Amann R."/>
            <person name="Reinhardt R."/>
        </authorList>
    </citation>
    <scope>NUCLEOTIDE SEQUENCE [LARGE SCALE GENOMIC DNA]</scope>
    <source>
        <strain>DSM 10527 / NCIMB 13988 / SH1</strain>
    </source>
</reference>
<protein>
    <recommendedName>
        <fullName evidence="1">GTPase Der</fullName>
    </recommendedName>
    <alternativeName>
        <fullName evidence="1">GTP-binding protein EngA</fullName>
    </alternativeName>
</protein>
<organism>
    <name type="scientific">Rhodopirellula baltica (strain DSM 10527 / NCIMB 13988 / SH1)</name>
    <dbReference type="NCBI Taxonomy" id="243090"/>
    <lineage>
        <taxon>Bacteria</taxon>
        <taxon>Pseudomonadati</taxon>
        <taxon>Planctomycetota</taxon>
        <taxon>Planctomycetia</taxon>
        <taxon>Pirellulales</taxon>
        <taxon>Pirellulaceae</taxon>
        <taxon>Rhodopirellula</taxon>
    </lineage>
</organism>
<dbReference type="EMBL" id="BX294142">
    <property type="protein sequence ID" value="CAD74340.1"/>
    <property type="molecule type" value="Genomic_DNA"/>
</dbReference>
<dbReference type="RefSeq" id="NP_866800.1">
    <property type="nucleotide sequence ID" value="NC_005027.1"/>
</dbReference>
<dbReference type="RefSeq" id="WP_007330049.1">
    <property type="nucleotide sequence ID" value="NC_005027.1"/>
</dbReference>
<dbReference type="SMR" id="Q7URJ8"/>
<dbReference type="FunCoup" id="Q7URJ8">
    <property type="interactions" value="464"/>
</dbReference>
<dbReference type="STRING" id="243090.RB5619"/>
<dbReference type="EnsemblBacteria" id="CAD74340">
    <property type="protein sequence ID" value="CAD74340"/>
    <property type="gene ID" value="RB5619"/>
</dbReference>
<dbReference type="KEGG" id="rba:RB5619"/>
<dbReference type="PATRIC" id="fig|243090.15.peg.2695"/>
<dbReference type="eggNOG" id="COG1160">
    <property type="taxonomic scope" value="Bacteria"/>
</dbReference>
<dbReference type="HOGENOM" id="CLU_016077_6_2_0"/>
<dbReference type="InParanoid" id="Q7URJ8"/>
<dbReference type="OrthoDB" id="9805918at2"/>
<dbReference type="Proteomes" id="UP000001025">
    <property type="component" value="Chromosome"/>
</dbReference>
<dbReference type="GO" id="GO:0005525">
    <property type="term" value="F:GTP binding"/>
    <property type="evidence" value="ECO:0007669"/>
    <property type="project" value="UniProtKB-UniRule"/>
</dbReference>
<dbReference type="GO" id="GO:0043022">
    <property type="term" value="F:ribosome binding"/>
    <property type="evidence" value="ECO:0000318"/>
    <property type="project" value="GO_Central"/>
</dbReference>
<dbReference type="GO" id="GO:0042254">
    <property type="term" value="P:ribosome biogenesis"/>
    <property type="evidence" value="ECO:0007669"/>
    <property type="project" value="UniProtKB-KW"/>
</dbReference>
<dbReference type="CDD" id="cd01894">
    <property type="entry name" value="EngA1"/>
    <property type="match status" value="1"/>
</dbReference>
<dbReference type="CDD" id="cd01895">
    <property type="entry name" value="EngA2"/>
    <property type="match status" value="1"/>
</dbReference>
<dbReference type="FunFam" id="3.30.300.20:FF:000004">
    <property type="entry name" value="GTPase Der"/>
    <property type="match status" value="1"/>
</dbReference>
<dbReference type="FunFam" id="3.40.50.300:FF:000040">
    <property type="entry name" value="GTPase Der"/>
    <property type="match status" value="1"/>
</dbReference>
<dbReference type="Gene3D" id="3.30.300.20">
    <property type="match status" value="1"/>
</dbReference>
<dbReference type="Gene3D" id="3.40.50.300">
    <property type="entry name" value="P-loop containing nucleotide triphosphate hydrolases"/>
    <property type="match status" value="2"/>
</dbReference>
<dbReference type="HAMAP" id="MF_00195">
    <property type="entry name" value="GTPase_Der"/>
    <property type="match status" value="1"/>
</dbReference>
<dbReference type="InterPro" id="IPR031166">
    <property type="entry name" value="G_ENGA"/>
</dbReference>
<dbReference type="InterPro" id="IPR006073">
    <property type="entry name" value="GTP-bd"/>
</dbReference>
<dbReference type="InterPro" id="IPR016484">
    <property type="entry name" value="GTPase_Der"/>
</dbReference>
<dbReference type="InterPro" id="IPR032859">
    <property type="entry name" value="KH_dom-like"/>
</dbReference>
<dbReference type="InterPro" id="IPR015946">
    <property type="entry name" value="KH_dom-like_a/b"/>
</dbReference>
<dbReference type="InterPro" id="IPR027417">
    <property type="entry name" value="P-loop_NTPase"/>
</dbReference>
<dbReference type="InterPro" id="IPR005225">
    <property type="entry name" value="Small_GTP-bd"/>
</dbReference>
<dbReference type="NCBIfam" id="TIGR03594">
    <property type="entry name" value="GTPase_EngA"/>
    <property type="match status" value="1"/>
</dbReference>
<dbReference type="NCBIfam" id="TIGR00231">
    <property type="entry name" value="small_GTP"/>
    <property type="match status" value="2"/>
</dbReference>
<dbReference type="PANTHER" id="PTHR43834">
    <property type="entry name" value="GTPASE DER"/>
    <property type="match status" value="1"/>
</dbReference>
<dbReference type="PANTHER" id="PTHR43834:SF6">
    <property type="entry name" value="GTPASE DER"/>
    <property type="match status" value="1"/>
</dbReference>
<dbReference type="Pfam" id="PF14714">
    <property type="entry name" value="KH_dom-like"/>
    <property type="match status" value="1"/>
</dbReference>
<dbReference type="Pfam" id="PF01926">
    <property type="entry name" value="MMR_HSR1"/>
    <property type="match status" value="2"/>
</dbReference>
<dbReference type="PIRSF" id="PIRSF006485">
    <property type="entry name" value="GTP-binding_EngA"/>
    <property type="match status" value="1"/>
</dbReference>
<dbReference type="PRINTS" id="PR00326">
    <property type="entry name" value="GTP1OBG"/>
</dbReference>
<dbReference type="SUPFAM" id="SSF52540">
    <property type="entry name" value="P-loop containing nucleoside triphosphate hydrolases"/>
    <property type="match status" value="2"/>
</dbReference>
<dbReference type="PROSITE" id="PS51712">
    <property type="entry name" value="G_ENGA"/>
    <property type="match status" value="2"/>
</dbReference>
<feature type="chain" id="PRO_0000179036" description="GTPase Der">
    <location>
        <begin position="1"/>
        <end position="454"/>
    </location>
</feature>
<feature type="domain" description="EngA-type G 1">
    <location>
        <begin position="4"/>
        <end position="168"/>
    </location>
</feature>
<feature type="domain" description="EngA-type G 2">
    <location>
        <begin position="178"/>
        <end position="352"/>
    </location>
</feature>
<feature type="domain" description="KH-like" evidence="1">
    <location>
        <begin position="353"/>
        <end position="437"/>
    </location>
</feature>
<feature type="binding site" evidence="1">
    <location>
        <begin position="10"/>
        <end position="17"/>
    </location>
    <ligand>
        <name>GTP</name>
        <dbReference type="ChEBI" id="CHEBI:37565"/>
        <label>1</label>
    </ligand>
</feature>
<feature type="binding site" evidence="1">
    <location>
        <begin position="57"/>
        <end position="61"/>
    </location>
    <ligand>
        <name>GTP</name>
        <dbReference type="ChEBI" id="CHEBI:37565"/>
        <label>1</label>
    </ligand>
</feature>
<feature type="binding site" evidence="1">
    <location>
        <begin position="120"/>
        <end position="123"/>
    </location>
    <ligand>
        <name>GTP</name>
        <dbReference type="ChEBI" id="CHEBI:37565"/>
        <label>1</label>
    </ligand>
</feature>
<feature type="binding site" evidence="1">
    <location>
        <begin position="184"/>
        <end position="191"/>
    </location>
    <ligand>
        <name>GTP</name>
        <dbReference type="ChEBI" id="CHEBI:37565"/>
        <label>2</label>
    </ligand>
</feature>
<feature type="binding site" evidence="1">
    <location>
        <begin position="231"/>
        <end position="235"/>
    </location>
    <ligand>
        <name>GTP</name>
        <dbReference type="ChEBI" id="CHEBI:37565"/>
        <label>2</label>
    </ligand>
</feature>
<feature type="binding site" evidence="1">
    <location>
        <begin position="296"/>
        <end position="299"/>
    </location>
    <ligand>
        <name>GTP</name>
        <dbReference type="ChEBI" id="CHEBI:37565"/>
        <label>2</label>
    </ligand>
</feature>
<accession>Q7URJ8</accession>
<gene>
    <name evidence="1" type="primary">der</name>
    <name type="synonym">engA</name>
    <name type="ordered locus">RB5619</name>
</gene>
<comment type="function">
    <text evidence="1">GTPase that plays an essential role in the late steps of ribosome biogenesis.</text>
</comment>
<comment type="subunit">
    <text evidence="1">Associates with the 50S ribosomal subunit.</text>
</comment>
<comment type="similarity">
    <text evidence="1">Belongs to the TRAFAC class TrmE-Era-EngA-EngB-Septin-like GTPase superfamily. EngA (Der) GTPase family.</text>
</comment>
<name>DER_RHOBA</name>